<comment type="function">
    <text evidence="1">Catalyzes the formation of sulfite from adenosine 5'-phosphosulfate (APS) using thioredoxin as an electron donor.</text>
</comment>
<comment type="catalytic activity">
    <reaction evidence="1">
        <text>[thioredoxin]-disulfide + sulfite + AMP + 2 H(+) = adenosine 5'-phosphosulfate + [thioredoxin]-dithiol</text>
        <dbReference type="Rhea" id="RHEA:21976"/>
        <dbReference type="Rhea" id="RHEA-COMP:10698"/>
        <dbReference type="Rhea" id="RHEA-COMP:10700"/>
        <dbReference type="ChEBI" id="CHEBI:15378"/>
        <dbReference type="ChEBI" id="CHEBI:17359"/>
        <dbReference type="ChEBI" id="CHEBI:29950"/>
        <dbReference type="ChEBI" id="CHEBI:50058"/>
        <dbReference type="ChEBI" id="CHEBI:58243"/>
        <dbReference type="ChEBI" id="CHEBI:456215"/>
        <dbReference type="EC" id="1.8.4.10"/>
    </reaction>
</comment>
<comment type="cofactor">
    <cofactor evidence="1">
        <name>[4Fe-4S] cluster</name>
        <dbReference type="ChEBI" id="CHEBI:49883"/>
    </cofactor>
    <text evidence="1">Binds 1 [4Fe-4S] cluster per subunit.</text>
</comment>
<comment type="pathway">
    <text evidence="1">Sulfur metabolism; hydrogen sulfide biosynthesis; sulfite from sulfate.</text>
</comment>
<comment type="subcellular location">
    <subcellularLocation>
        <location evidence="1">Cytoplasm</location>
    </subcellularLocation>
</comment>
<comment type="similarity">
    <text evidence="1">Belongs to the PAPS reductase family. CysH subfamily.</text>
</comment>
<name>CYSH_MYCA9</name>
<feature type="chain" id="PRO_1000092177" description="Adenosine 5'-phosphosulfate reductase">
    <location>
        <begin position="1"/>
        <end position="237"/>
    </location>
</feature>
<feature type="active site" description="Nucleophile; cysteine thiosulfonate intermediate" evidence="1">
    <location>
        <position position="232"/>
    </location>
</feature>
<feature type="binding site" evidence="1">
    <location>
        <position position="123"/>
    </location>
    <ligand>
        <name>[4Fe-4S] cluster</name>
        <dbReference type="ChEBI" id="CHEBI:49883"/>
    </ligand>
</feature>
<feature type="binding site" evidence="1">
    <location>
        <position position="124"/>
    </location>
    <ligand>
        <name>[4Fe-4S] cluster</name>
        <dbReference type="ChEBI" id="CHEBI:49883"/>
    </ligand>
</feature>
<feature type="binding site" evidence="1">
    <location>
        <position position="206"/>
    </location>
    <ligand>
        <name>[4Fe-4S] cluster</name>
        <dbReference type="ChEBI" id="CHEBI:49883"/>
    </ligand>
</feature>
<feature type="binding site" evidence="1">
    <location>
        <position position="209"/>
    </location>
    <ligand>
        <name>[4Fe-4S] cluster</name>
        <dbReference type="ChEBI" id="CHEBI:49883"/>
    </ligand>
</feature>
<gene>
    <name evidence="1" type="primary">cysH</name>
    <name type="ordered locus">MAB_1661c</name>
</gene>
<dbReference type="EC" id="1.8.4.10" evidence="1"/>
<dbReference type="EMBL" id="CU458896">
    <property type="protein sequence ID" value="CAM61746.1"/>
    <property type="molecule type" value="Genomic_DNA"/>
</dbReference>
<dbReference type="RefSeq" id="WP_005084994.1">
    <property type="nucleotide sequence ID" value="NZ_MLCG01000002.1"/>
</dbReference>
<dbReference type="SMR" id="B1MN34"/>
<dbReference type="GeneID" id="93378612"/>
<dbReference type="KEGG" id="mab:MAB_1661c"/>
<dbReference type="Proteomes" id="UP000007137">
    <property type="component" value="Chromosome"/>
</dbReference>
<dbReference type="GO" id="GO:0005737">
    <property type="term" value="C:cytoplasm"/>
    <property type="evidence" value="ECO:0007669"/>
    <property type="project" value="UniProtKB-SubCell"/>
</dbReference>
<dbReference type="GO" id="GO:0051539">
    <property type="term" value="F:4 iron, 4 sulfur cluster binding"/>
    <property type="evidence" value="ECO:0007669"/>
    <property type="project" value="UniProtKB-UniRule"/>
</dbReference>
<dbReference type="GO" id="GO:0043866">
    <property type="term" value="F:adenylyl-sulfate reductase (thioredoxin) activity"/>
    <property type="evidence" value="ECO:0007669"/>
    <property type="project" value="UniProtKB-EC"/>
</dbReference>
<dbReference type="GO" id="GO:0046872">
    <property type="term" value="F:metal ion binding"/>
    <property type="evidence" value="ECO:0007669"/>
    <property type="project" value="UniProtKB-KW"/>
</dbReference>
<dbReference type="GO" id="GO:0004604">
    <property type="term" value="F:phosphoadenylyl-sulfate reductase (thioredoxin) activity"/>
    <property type="evidence" value="ECO:0007669"/>
    <property type="project" value="UniProtKB-UniRule"/>
</dbReference>
<dbReference type="GO" id="GO:0019344">
    <property type="term" value="P:cysteine biosynthetic process"/>
    <property type="evidence" value="ECO:0007669"/>
    <property type="project" value="InterPro"/>
</dbReference>
<dbReference type="GO" id="GO:0070814">
    <property type="term" value="P:hydrogen sulfide biosynthetic process"/>
    <property type="evidence" value="ECO:0007669"/>
    <property type="project" value="UniProtKB-UniRule"/>
</dbReference>
<dbReference type="GO" id="GO:0019379">
    <property type="term" value="P:sulfate assimilation, phosphoadenylyl sulfate reduction by phosphoadenylyl-sulfate reductase (thioredoxin)"/>
    <property type="evidence" value="ECO:0007669"/>
    <property type="project" value="UniProtKB-UniRule"/>
</dbReference>
<dbReference type="CDD" id="cd23945">
    <property type="entry name" value="PAPS_reductase"/>
    <property type="match status" value="1"/>
</dbReference>
<dbReference type="Gene3D" id="3.40.50.620">
    <property type="entry name" value="HUPs"/>
    <property type="match status" value="1"/>
</dbReference>
<dbReference type="HAMAP" id="MF_00063">
    <property type="entry name" value="CysH"/>
    <property type="match status" value="1"/>
</dbReference>
<dbReference type="InterPro" id="IPR011798">
    <property type="entry name" value="APS_reductase"/>
</dbReference>
<dbReference type="InterPro" id="IPR004511">
    <property type="entry name" value="PAPS/APS_Rdtase"/>
</dbReference>
<dbReference type="InterPro" id="IPR002500">
    <property type="entry name" value="PAPS_reduct_dom"/>
</dbReference>
<dbReference type="InterPro" id="IPR014729">
    <property type="entry name" value="Rossmann-like_a/b/a_fold"/>
</dbReference>
<dbReference type="NCBIfam" id="TIGR02055">
    <property type="entry name" value="APS_reductase"/>
    <property type="match status" value="1"/>
</dbReference>
<dbReference type="NCBIfam" id="TIGR00434">
    <property type="entry name" value="cysH"/>
    <property type="match status" value="1"/>
</dbReference>
<dbReference type="NCBIfam" id="NF002537">
    <property type="entry name" value="PRK02090.1"/>
    <property type="match status" value="1"/>
</dbReference>
<dbReference type="PANTHER" id="PTHR46509">
    <property type="entry name" value="PHOSPHOADENOSINE PHOSPHOSULFATE REDUCTASE"/>
    <property type="match status" value="1"/>
</dbReference>
<dbReference type="PANTHER" id="PTHR46509:SF1">
    <property type="entry name" value="PHOSPHOADENOSINE PHOSPHOSULFATE REDUCTASE"/>
    <property type="match status" value="1"/>
</dbReference>
<dbReference type="Pfam" id="PF01507">
    <property type="entry name" value="PAPS_reduct"/>
    <property type="match status" value="1"/>
</dbReference>
<dbReference type="PIRSF" id="PIRSF000857">
    <property type="entry name" value="PAPS_reductase"/>
    <property type="match status" value="1"/>
</dbReference>
<dbReference type="SUPFAM" id="SSF52402">
    <property type="entry name" value="Adenine nucleotide alpha hydrolases-like"/>
    <property type="match status" value="1"/>
</dbReference>
<keyword id="KW-0963">Cytoplasm</keyword>
<keyword id="KW-0408">Iron</keyword>
<keyword id="KW-0411">Iron-sulfur</keyword>
<keyword id="KW-0479">Metal-binding</keyword>
<keyword id="KW-0560">Oxidoreductase</keyword>
<keyword id="KW-1185">Reference proteome</keyword>
<protein>
    <recommendedName>
        <fullName evidence="1">Adenosine 5'-phosphosulfate reductase</fullName>
        <shortName evidence="1">APS reductase</shortName>
        <ecNumber evidence="1">1.8.4.10</ecNumber>
    </recommendedName>
    <alternativeName>
        <fullName evidence="1">5'-adenylylsulfate reductase</fullName>
    </alternativeName>
    <alternativeName>
        <fullName evidence="1">Thioredoxin-dependent 5'-adenylylsulfate reductase</fullName>
    </alternativeName>
</protein>
<accession>B1MN34</accession>
<evidence type="ECO:0000255" key="1">
    <source>
        <dbReference type="HAMAP-Rule" id="MF_00063"/>
    </source>
</evidence>
<reference key="1">
    <citation type="journal article" date="2009" name="PLoS ONE">
        <title>Non mycobacterial virulence genes in the genome of the emerging pathogen Mycobacterium abscessus.</title>
        <authorList>
            <person name="Ripoll F."/>
            <person name="Pasek S."/>
            <person name="Schenowitz C."/>
            <person name="Dossat C."/>
            <person name="Barbe V."/>
            <person name="Rottman M."/>
            <person name="Macheras E."/>
            <person name="Heym B."/>
            <person name="Herrmann J.L."/>
            <person name="Daffe M."/>
            <person name="Brosch R."/>
            <person name="Risler J.L."/>
            <person name="Gaillard J.L."/>
        </authorList>
    </citation>
    <scope>NUCLEOTIDE SEQUENCE [LARGE SCALE GENOMIC DNA]</scope>
    <source>
        <strain>ATCC 19977 / DSM 44196 / CCUG 20993 / CIP 104536 / JCM 13569 / NCTC 13031 / TMC 1543 / L948</strain>
    </source>
</reference>
<sequence length="237" mass="25623">MSRETTTKDLDSLRALAERGAAELQDASAEELLRWTDENFGGNYVVASNMQDAVLVDLAAQVRPGVDVLFLDTGYHFAETIGTRDAVESVYDIHVVNVAPEQTVAQQDELVGKDLFASDPGECCRLRKVVPLRKSLAGYAAWVTGLRRVDAPTRANAPLISFDEAFGLVKINAIAAWTDEDMQKYIDEHGTLVNPLVDEGYPSIGCAPCTAKPVLGGDARSGRWQGLAKTECGLHAS</sequence>
<organism>
    <name type="scientific">Mycobacteroides abscessus (strain ATCC 19977 / DSM 44196 / CCUG 20993 / CIP 104536 / JCM 13569 / NCTC 13031 / TMC 1543 / L948)</name>
    <name type="common">Mycobacterium abscessus</name>
    <dbReference type="NCBI Taxonomy" id="561007"/>
    <lineage>
        <taxon>Bacteria</taxon>
        <taxon>Bacillati</taxon>
        <taxon>Actinomycetota</taxon>
        <taxon>Actinomycetes</taxon>
        <taxon>Mycobacteriales</taxon>
        <taxon>Mycobacteriaceae</taxon>
        <taxon>Mycobacteroides</taxon>
        <taxon>Mycobacteroides abscessus</taxon>
    </lineage>
</organism>
<proteinExistence type="inferred from homology"/>